<comment type="subunit">
    <text>Dimer. The subunits show apparent MW heterogeneity (32000-35000 MW), which may result from different carbohydrate content, AA sequence, or polypeptide length.</text>
</comment>
<comment type="PTM">
    <text>Contains 5-6% carbohydrate.</text>
</comment>
<proteinExistence type="evidence at protein level"/>
<dbReference type="PIR" id="PA0006">
    <property type="entry name" value="PA0006"/>
</dbReference>
<dbReference type="GO" id="GO:0030246">
    <property type="term" value="F:carbohydrate binding"/>
    <property type="evidence" value="ECO:0007669"/>
    <property type="project" value="UniProtKB-KW"/>
</dbReference>
<organism>
    <name type="scientific">Psophocarpus scandens</name>
    <name type="common">Tropical African winged-bean</name>
    <dbReference type="NCBI Taxonomy" id="3890"/>
    <lineage>
        <taxon>Eukaryota</taxon>
        <taxon>Viridiplantae</taxon>
        <taxon>Streptophyta</taxon>
        <taxon>Embryophyta</taxon>
        <taxon>Tracheophyta</taxon>
        <taxon>Spermatophyta</taxon>
        <taxon>Magnoliopsida</taxon>
        <taxon>eudicotyledons</taxon>
        <taxon>Gunneridae</taxon>
        <taxon>Pentapetalae</taxon>
        <taxon>rosids</taxon>
        <taxon>fabids</taxon>
        <taxon>Fabales</taxon>
        <taxon>Fabaceae</taxon>
        <taxon>Papilionoideae</taxon>
        <taxon>50 kb inversion clade</taxon>
        <taxon>NPAAA clade</taxon>
        <taxon>indigoferoid/millettioid clade</taxon>
        <taxon>Phaseoleae</taxon>
        <taxon>Psophocarpus</taxon>
    </lineage>
</organism>
<reference key="1">
    <citation type="journal article" date="1988" name="Phytochemistry">
        <title>Isolation and characterization of the lectins from the seeds of Psophocarpus scandens.</title>
        <authorList>
            <person name="Kortt A.A."/>
        </authorList>
    </citation>
    <scope>PROTEIN SEQUENCE</scope>
    <source>
        <tissue>Seed</tissue>
    </source>
</reference>
<feature type="chain" id="PRO_0000105120" description="Acidic lectin A3">
    <location>
        <begin position="1"/>
        <end position="15" status="greater than"/>
    </location>
</feature>
<feature type="non-terminal residue">
    <location>
        <position position="15"/>
    </location>
</feature>
<sequence>TETQSFNFNVFEPEN</sequence>
<accession>P22583</accession>
<protein>
    <recommendedName>
        <fullName>Acidic lectin A3</fullName>
    </recommendedName>
</protein>
<keyword id="KW-0903">Direct protein sequencing</keyword>
<keyword id="KW-0430">Lectin</keyword>
<name>LECA3_PSOSC</name>